<comment type="function">
    <text evidence="1">Binds as a heterodimer with protein bS6 to the central domain of the 16S rRNA, where it helps stabilize the platform of the 30S subunit.</text>
</comment>
<comment type="subunit">
    <text evidence="1">Part of the 30S ribosomal subunit. Forms a tight heterodimer with protein bS6.</text>
</comment>
<comment type="similarity">
    <text evidence="1">Belongs to the bacterial ribosomal protein bS18 family.</text>
</comment>
<sequence length="87" mass="10278">MAFKKKFAPRRKFCRFCADKELPIDYKRADILRDFITERGKIIARRITGTCAHHQRVLTREIKRARQMALLIYTATHSSDVKKKSIL</sequence>
<accession>A1VF29</accession>
<organism>
    <name type="scientific">Nitratidesulfovibrio vulgaris (strain DP4)</name>
    <name type="common">Desulfovibrio vulgaris</name>
    <dbReference type="NCBI Taxonomy" id="391774"/>
    <lineage>
        <taxon>Bacteria</taxon>
        <taxon>Pseudomonadati</taxon>
        <taxon>Thermodesulfobacteriota</taxon>
        <taxon>Desulfovibrionia</taxon>
        <taxon>Desulfovibrionales</taxon>
        <taxon>Desulfovibrionaceae</taxon>
        <taxon>Nitratidesulfovibrio</taxon>
    </lineage>
</organism>
<evidence type="ECO:0000255" key="1">
    <source>
        <dbReference type="HAMAP-Rule" id="MF_00270"/>
    </source>
</evidence>
<evidence type="ECO:0000305" key="2"/>
<dbReference type="EMBL" id="CP000527">
    <property type="protein sequence ID" value="ABM29045.1"/>
    <property type="molecule type" value="Genomic_DNA"/>
</dbReference>
<dbReference type="RefSeq" id="WP_010938256.1">
    <property type="nucleotide sequence ID" value="NC_008751.1"/>
</dbReference>
<dbReference type="SMR" id="A1VF29"/>
<dbReference type="KEGG" id="dvl:Dvul_2029"/>
<dbReference type="HOGENOM" id="CLU_148710_2_2_7"/>
<dbReference type="Proteomes" id="UP000009173">
    <property type="component" value="Chromosome"/>
</dbReference>
<dbReference type="GO" id="GO:0022627">
    <property type="term" value="C:cytosolic small ribosomal subunit"/>
    <property type="evidence" value="ECO:0007669"/>
    <property type="project" value="TreeGrafter"/>
</dbReference>
<dbReference type="GO" id="GO:0070181">
    <property type="term" value="F:small ribosomal subunit rRNA binding"/>
    <property type="evidence" value="ECO:0007669"/>
    <property type="project" value="TreeGrafter"/>
</dbReference>
<dbReference type="GO" id="GO:0003735">
    <property type="term" value="F:structural constituent of ribosome"/>
    <property type="evidence" value="ECO:0007669"/>
    <property type="project" value="InterPro"/>
</dbReference>
<dbReference type="GO" id="GO:0006412">
    <property type="term" value="P:translation"/>
    <property type="evidence" value="ECO:0007669"/>
    <property type="project" value="UniProtKB-UniRule"/>
</dbReference>
<dbReference type="Gene3D" id="4.10.640.10">
    <property type="entry name" value="Ribosomal protein S18"/>
    <property type="match status" value="1"/>
</dbReference>
<dbReference type="HAMAP" id="MF_00270">
    <property type="entry name" value="Ribosomal_bS18"/>
    <property type="match status" value="1"/>
</dbReference>
<dbReference type="InterPro" id="IPR001648">
    <property type="entry name" value="Ribosomal_bS18"/>
</dbReference>
<dbReference type="InterPro" id="IPR036870">
    <property type="entry name" value="Ribosomal_bS18_sf"/>
</dbReference>
<dbReference type="NCBIfam" id="TIGR00165">
    <property type="entry name" value="S18"/>
    <property type="match status" value="1"/>
</dbReference>
<dbReference type="PANTHER" id="PTHR13479">
    <property type="entry name" value="30S RIBOSOMAL PROTEIN S18"/>
    <property type="match status" value="1"/>
</dbReference>
<dbReference type="PANTHER" id="PTHR13479:SF40">
    <property type="entry name" value="SMALL RIBOSOMAL SUBUNIT PROTEIN BS18M"/>
    <property type="match status" value="1"/>
</dbReference>
<dbReference type="Pfam" id="PF01084">
    <property type="entry name" value="Ribosomal_S18"/>
    <property type="match status" value="1"/>
</dbReference>
<dbReference type="PRINTS" id="PR00974">
    <property type="entry name" value="RIBOSOMALS18"/>
</dbReference>
<dbReference type="SUPFAM" id="SSF46911">
    <property type="entry name" value="Ribosomal protein S18"/>
    <property type="match status" value="1"/>
</dbReference>
<protein>
    <recommendedName>
        <fullName evidence="1">Small ribosomal subunit protein bS18</fullName>
    </recommendedName>
    <alternativeName>
        <fullName evidence="2">30S ribosomal protein S18</fullName>
    </alternativeName>
</protein>
<keyword id="KW-0687">Ribonucleoprotein</keyword>
<keyword id="KW-0689">Ribosomal protein</keyword>
<keyword id="KW-0694">RNA-binding</keyword>
<keyword id="KW-0699">rRNA-binding</keyword>
<feature type="chain" id="PRO_1000003495" description="Small ribosomal subunit protein bS18">
    <location>
        <begin position="1"/>
        <end position="87"/>
    </location>
</feature>
<proteinExistence type="inferred from homology"/>
<gene>
    <name evidence="1" type="primary">rpsR</name>
    <name type="ordered locus">Dvul_2029</name>
</gene>
<name>RS18_NITV4</name>
<reference key="1">
    <citation type="journal article" date="2009" name="Environ. Microbiol.">
        <title>Contribution of mobile genetic elements to Desulfovibrio vulgaris genome plasticity.</title>
        <authorList>
            <person name="Walker C.B."/>
            <person name="Stolyar S."/>
            <person name="Chivian D."/>
            <person name="Pinel N."/>
            <person name="Gabster J.A."/>
            <person name="Dehal P.S."/>
            <person name="He Z."/>
            <person name="Yang Z.K."/>
            <person name="Yen H.C."/>
            <person name="Zhou J."/>
            <person name="Wall J.D."/>
            <person name="Hazen T.C."/>
            <person name="Arkin A.P."/>
            <person name="Stahl D.A."/>
        </authorList>
    </citation>
    <scope>NUCLEOTIDE SEQUENCE [LARGE SCALE GENOMIC DNA]</scope>
    <source>
        <strain>DP4</strain>
    </source>
</reference>